<dbReference type="EMBL" id="U00089">
    <property type="protein sequence ID" value="AAB95750.1"/>
    <property type="molecule type" value="Genomic_DNA"/>
</dbReference>
<dbReference type="PIR" id="S73428">
    <property type="entry name" value="S73428"/>
</dbReference>
<dbReference type="RefSeq" id="NP_109740.1">
    <property type="nucleotide sequence ID" value="NC_000912.1"/>
</dbReference>
<dbReference type="SMR" id="P75062"/>
<dbReference type="STRING" id="272634.MPN_052"/>
<dbReference type="EnsemblBacteria" id="AAB95750">
    <property type="protein sequence ID" value="AAB95750"/>
    <property type="gene ID" value="MPN_052"/>
</dbReference>
<dbReference type="KEGG" id="mpn:MPN_052"/>
<dbReference type="PATRIC" id="fig|272634.6.peg.52"/>
<dbReference type="HOGENOM" id="CLU_461397_0_0_14"/>
<dbReference type="OrthoDB" id="397060at2"/>
<dbReference type="BioCyc" id="MPNE272634:G1GJ3-75-MONOMER"/>
<dbReference type="Proteomes" id="UP000000808">
    <property type="component" value="Chromosome"/>
</dbReference>
<dbReference type="GO" id="GO:0005886">
    <property type="term" value="C:plasma membrane"/>
    <property type="evidence" value="ECO:0007669"/>
    <property type="project" value="UniProtKB-SubCell"/>
</dbReference>
<dbReference type="Gene3D" id="3.40.50.2300">
    <property type="match status" value="1"/>
</dbReference>
<dbReference type="InterPro" id="IPR050957">
    <property type="entry name" value="BMP_lipoprotein"/>
</dbReference>
<dbReference type="InterPro" id="IPR003760">
    <property type="entry name" value="PnrA-like"/>
</dbReference>
<dbReference type="PANTHER" id="PTHR34296:SF2">
    <property type="entry name" value="ABC TRANSPORTER GUANOSINE-BINDING PROTEIN NUPN"/>
    <property type="match status" value="1"/>
</dbReference>
<dbReference type="PANTHER" id="PTHR34296">
    <property type="entry name" value="TRANSCRIPTIONAL ACTIVATOR PROTEIN MED"/>
    <property type="match status" value="1"/>
</dbReference>
<dbReference type="Pfam" id="PF02608">
    <property type="entry name" value="Bmp"/>
    <property type="match status" value="1"/>
</dbReference>
<dbReference type="PROSITE" id="PS51257">
    <property type="entry name" value="PROKAR_LIPOPROTEIN"/>
    <property type="match status" value="1"/>
</dbReference>
<gene>
    <name type="ordered locus">MPN_052</name>
    <name type="ORF">D09_orf657</name>
    <name type="ORF">MP102</name>
</gene>
<name>Y052_MYCPN</name>
<accession>P75062</accession>
<keyword id="KW-1003">Cell membrane</keyword>
<keyword id="KW-0449">Lipoprotein</keyword>
<keyword id="KW-0472">Membrane</keyword>
<keyword id="KW-0564">Palmitate</keyword>
<keyword id="KW-1185">Reference proteome</keyword>
<keyword id="KW-0732">Signal</keyword>
<evidence type="ECO:0000255" key="1">
    <source>
        <dbReference type="PROSITE-ProRule" id="PRU00303"/>
    </source>
</evidence>
<evidence type="ECO:0000256" key="2">
    <source>
        <dbReference type="SAM" id="MobiDB-lite"/>
    </source>
</evidence>
<evidence type="ECO:0000305" key="3"/>
<proteinExistence type="inferred from homology"/>
<reference key="1">
    <citation type="journal article" date="1996" name="Nucleic Acids Res.">
        <title>Complete sequence analysis of the genome of the bacterium Mycoplasma pneumoniae.</title>
        <authorList>
            <person name="Himmelreich R."/>
            <person name="Hilbert H."/>
            <person name="Plagens H."/>
            <person name="Pirkl E."/>
            <person name="Li B.-C."/>
            <person name="Herrmann R."/>
        </authorList>
    </citation>
    <scope>NUCLEOTIDE SEQUENCE [LARGE SCALE GENOMIC DNA]</scope>
    <source>
        <strain>ATCC 29342 / M129 / Subtype 1</strain>
    </source>
</reference>
<feature type="signal peptide" evidence="1">
    <location>
        <begin position="1"/>
        <end position="26"/>
    </location>
</feature>
<feature type="chain" id="PRO_0000014023" description="Uncharacterized lipoprotein MG040 homolog">
    <location>
        <begin position="27"/>
        <end position="657"/>
    </location>
</feature>
<feature type="region of interest" description="Disordered" evidence="2">
    <location>
        <begin position="291"/>
        <end position="316"/>
    </location>
</feature>
<feature type="region of interest" description="Disordered" evidence="2">
    <location>
        <begin position="468"/>
        <end position="496"/>
    </location>
</feature>
<feature type="region of interest" description="Disordered" evidence="2">
    <location>
        <begin position="516"/>
        <end position="563"/>
    </location>
</feature>
<feature type="compositionally biased region" description="Polar residues" evidence="2">
    <location>
        <begin position="294"/>
        <end position="304"/>
    </location>
</feature>
<feature type="compositionally biased region" description="Basic and acidic residues" evidence="2">
    <location>
        <begin position="469"/>
        <end position="495"/>
    </location>
</feature>
<feature type="compositionally biased region" description="Polar residues" evidence="2">
    <location>
        <begin position="516"/>
        <end position="525"/>
    </location>
</feature>
<feature type="compositionally biased region" description="Basic and acidic residues" evidence="2">
    <location>
        <begin position="526"/>
        <end position="545"/>
    </location>
</feature>
<feature type="compositionally biased region" description="Low complexity" evidence="2">
    <location>
        <begin position="546"/>
        <end position="559"/>
    </location>
</feature>
<feature type="lipid moiety-binding region" description="N-palmitoyl cysteine" evidence="1">
    <location>
        <position position="27"/>
    </location>
</feature>
<feature type="lipid moiety-binding region" description="S-diacylglycerol cysteine" evidence="1">
    <location>
        <position position="27"/>
    </location>
</feature>
<comment type="subcellular location">
    <subcellularLocation>
        <location evidence="1">Cell membrane</location>
        <topology evidence="1">Lipid-anchor</topology>
    </subcellularLocation>
</comment>
<comment type="similarity">
    <text evidence="3">To T.pallidum TmpC.</text>
</comment>
<organism>
    <name type="scientific">Mycoplasma pneumoniae (strain ATCC 29342 / M129 / Subtype 1)</name>
    <name type="common">Mycoplasmoides pneumoniae</name>
    <dbReference type="NCBI Taxonomy" id="272634"/>
    <lineage>
        <taxon>Bacteria</taxon>
        <taxon>Bacillati</taxon>
        <taxon>Mycoplasmatota</taxon>
        <taxon>Mycoplasmoidales</taxon>
        <taxon>Mycoplasmoidaceae</taxon>
        <taxon>Mycoplasmoides</taxon>
    </lineage>
</organism>
<protein>
    <recommendedName>
        <fullName>Uncharacterized lipoprotein MG040 homolog</fullName>
    </recommendedName>
</protein>
<sequence>MFGKGLVKKSLLFFSGVSTMAVFLVSCGATRIWESSIQLLVSNDEATLADKSFSEMSYEGIRRYFRSQKHIELPSPNSSLLQDGNGLWKRPGRTLSDRIATFKNIKNDGSDVIVATGFNQQEALQAISSDDRRYLADKNDLAKVGFIFVDGQIEKEYNVINKTPQFRSTPLNISSVAFRSDDGSFLTGVATAVYLNLNQDYFLKKNGATNNSSQDLTVSGFVGVPIPSTLSFLNGFRLGIAYFNEVIYTHLSDAETTSDNKSNSSSASNSVLVQLKQMQGNDKKIKKIKWISPKQGSDNNSNLSIDDHKSGSFSSTEPRATTIINNLLDKGVSAIIPVAGPQVNLAVNEVARRKAHTAIIGVDSAQELLDINQDAPDKDQLIKGNKKIIPFSSIKALDVAIENMLIAIQKGSDNNGYKGFGYNNIGTVGTSSVGISEAGYEFLIDPVFWKTTQSQGKSMATNMTNLKRLSSDDTNTKKALKEVSTHKNGSDKDGIIGKYSNLLTKKSTTVTAVAQKSMTDNNSGTEQKKNLSEVDTKKKEKESKGKTQSNGQDSGQQNGKETNDIISKYSKLLTMTTMNNKVMSSKKQSSDDNSFKKTSENGDWVIKGDELTKKKSTELPAFAKGADYPTFPTEAVSVINGSTALDGKGFKWSFKQI</sequence>